<name>PURQ_MYCLE</name>
<evidence type="ECO:0000255" key="1">
    <source>
        <dbReference type="HAMAP-Rule" id="MF_00421"/>
    </source>
</evidence>
<gene>
    <name evidence="1" type="primary">purQ</name>
    <name type="ordered locus">ML2219</name>
</gene>
<reference key="1">
    <citation type="journal article" date="2001" name="Nature">
        <title>Massive gene decay in the leprosy bacillus.</title>
        <authorList>
            <person name="Cole S.T."/>
            <person name="Eiglmeier K."/>
            <person name="Parkhill J."/>
            <person name="James K.D."/>
            <person name="Thomson N.R."/>
            <person name="Wheeler P.R."/>
            <person name="Honore N."/>
            <person name="Garnier T."/>
            <person name="Churcher C.M."/>
            <person name="Harris D.E."/>
            <person name="Mungall K.L."/>
            <person name="Basham D."/>
            <person name="Brown D."/>
            <person name="Chillingworth T."/>
            <person name="Connor R."/>
            <person name="Davies R.M."/>
            <person name="Devlin K."/>
            <person name="Duthoy S."/>
            <person name="Feltwell T."/>
            <person name="Fraser A."/>
            <person name="Hamlin N."/>
            <person name="Holroyd S."/>
            <person name="Hornsby T."/>
            <person name="Jagels K."/>
            <person name="Lacroix C."/>
            <person name="Maclean J."/>
            <person name="Moule S."/>
            <person name="Murphy L.D."/>
            <person name="Oliver K."/>
            <person name="Quail M.A."/>
            <person name="Rajandream M.A."/>
            <person name="Rutherford K.M."/>
            <person name="Rutter S."/>
            <person name="Seeger K."/>
            <person name="Simon S."/>
            <person name="Simmonds M."/>
            <person name="Skelton J."/>
            <person name="Squares R."/>
            <person name="Squares S."/>
            <person name="Stevens K."/>
            <person name="Taylor K."/>
            <person name="Whitehead S."/>
            <person name="Woodward J.R."/>
            <person name="Barrell B.G."/>
        </authorList>
    </citation>
    <scope>NUCLEOTIDE SEQUENCE [LARGE SCALE GENOMIC DNA]</scope>
    <source>
        <strain>TN</strain>
    </source>
</reference>
<dbReference type="EC" id="6.3.5.3" evidence="1"/>
<dbReference type="EC" id="3.5.1.2" evidence="1"/>
<dbReference type="EMBL" id="Z95151">
    <property type="protein sequence ID" value="CAB08429.1"/>
    <property type="molecule type" value="Genomic_DNA"/>
</dbReference>
<dbReference type="EMBL" id="AL583924">
    <property type="protein sequence ID" value="CAC31174.1"/>
    <property type="molecule type" value="Genomic_DNA"/>
</dbReference>
<dbReference type="PIR" id="F87186">
    <property type="entry name" value="F87186"/>
</dbReference>
<dbReference type="RefSeq" id="NP_302453.1">
    <property type="nucleotide sequence ID" value="NC_002677.1"/>
</dbReference>
<dbReference type="RefSeq" id="WP_010908773.1">
    <property type="nucleotide sequence ID" value="NC_002677.1"/>
</dbReference>
<dbReference type="SMR" id="O05756"/>
<dbReference type="STRING" id="272631.gene:17576076"/>
<dbReference type="KEGG" id="mle:ML2219"/>
<dbReference type="PATRIC" id="fig|272631.5.peg.4204"/>
<dbReference type="Leproma" id="ML2219"/>
<dbReference type="eggNOG" id="COG0047">
    <property type="taxonomic scope" value="Bacteria"/>
</dbReference>
<dbReference type="HOGENOM" id="CLU_001031_3_1_11"/>
<dbReference type="OrthoDB" id="9804441at2"/>
<dbReference type="UniPathway" id="UPA00074">
    <property type="reaction ID" value="UER00128"/>
</dbReference>
<dbReference type="Proteomes" id="UP000000806">
    <property type="component" value="Chromosome"/>
</dbReference>
<dbReference type="GO" id="GO:0005737">
    <property type="term" value="C:cytoplasm"/>
    <property type="evidence" value="ECO:0007669"/>
    <property type="project" value="UniProtKB-SubCell"/>
</dbReference>
<dbReference type="GO" id="GO:0005524">
    <property type="term" value="F:ATP binding"/>
    <property type="evidence" value="ECO:0007669"/>
    <property type="project" value="UniProtKB-KW"/>
</dbReference>
<dbReference type="GO" id="GO:0004359">
    <property type="term" value="F:glutaminase activity"/>
    <property type="evidence" value="ECO:0007669"/>
    <property type="project" value="UniProtKB-EC"/>
</dbReference>
<dbReference type="GO" id="GO:0004642">
    <property type="term" value="F:phosphoribosylformylglycinamidine synthase activity"/>
    <property type="evidence" value="ECO:0007669"/>
    <property type="project" value="UniProtKB-UniRule"/>
</dbReference>
<dbReference type="GO" id="GO:0006189">
    <property type="term" value="P:'de novo' IMP biosynthetic process"/>
    <property type="evidence" value="ECO:0007669"/>
    <property type="project" value="UniProtKB-UniRule"/>
</dbReference>
<dbReference type="CDD" id="cd01740">
    <property type="entry name" value="GATase1_FGAR_AT"/>
    <property type="match status" value="1"/>
</dbReference>
<dbReference type="FunFam" id="3.40.50.880:FF:000019">
    <property type="entry name" value="Phosphoribosylformylglycinamidine synthase subunit PurQ"/>
    <property type="match status" value="1"/>
</dbReference>
<dbReference type="Gene3D" id="3.40.50.880">
    <property type="match status" value="1"/>
</dbReference>
<dbReference type="HAMAP" id="MF_00421">
    <property type="entry name" value="PurQ"/>
    <property type="match status" value="1"/>
</dbReference>
<dbReference type="InterPro" id="IPR029062">
    <property type="entry name" value="Class_I_gatase-like"/>
</dbReference>
<dbReference type="InterPro" id="IPR010075">
    <property type="entry name" value="PRibForGlyAmidine_synth_PurQ"/>
</dbReference>
<dbReference type="NCBIfam" id="TIGR01737">
    <property type="entry name" value="FGAM_synth_I"/>
    <property type="match status" value="1"/>
</dbReference>
<dbReference type="NCBIfam" id="NF002957">
    <property type="entry name" value="PRK03619.1"/>
    <property type="match status" value="1"/>
</dbReference>
<dbReference type="PANTHER" id="PTHR47552">
    <property type="entry name" value="PHOSPHORIBOSYLFORMYLGLYCINAMIDINE SYNTHASE SUBUNIT PURQ"/>
    <property type="match status" value="1"/>
</dbReference>
<dbReference type="PANTHER" id="PTHR47552:SF1">
    <property type="entry name" value="PHOSPHORIBOSYLFORMYLGLYCINAMIDINE SYNTHASE SUBUNIT PURQ"/>
    <property type="match status" value="1"/>
</dbReference>
<dbReference type="Pfam" id="PF13507">
    <property type="entry name" value="GATase_5"/>
    <property type="match status" value="1"/>
</dbReference>
<dbReference type="PIRSF" id="PIRSF001586">
    <property type="entry name" value="FGAM_synth_I"/>
    <property type="match status" value="1"/>
</dbReference>
<dbReference type="SMART" id="SM01211">
    <property type="entry name" value="GATase_5"/>
    <property type="match status" value="1"/>
</dbReference>
<dbReference type="SUPFAM" id="SSF52317">
    <property type="entry name" value="Class I glutamine amidotransferase-like"/>
    <property type="match status" value="1"/>
</dbReference>
<dbReference type="PROSITE" id="PS51273">
    <property type="entry name" value="GATASE_TYPE_1"/>
    <property type="match status" value="1"/>
</dbReference>
<accession>O05756</accession>
<protein>
    <recommendedName>
        <fullName evidence="1">Phosphoribosylformylglycinamidine synthase subunit PurQ</fullName>
        <shortName evidence="1">FGAM synthase</shortName>
        <ecNumber evidence="1">6.3.5.3</ecNumber>
    </recommendedName>
    <alternativeName>
        <fullName evidence="1">Formylglycinamide ribonucleotide amidotransferase subunit I</fullName>
        <shortName evidence="1">FGAR amidotransferase I</shortName>
        <shortName evidence="1">FGAR-AT I</shortName>
    </alternativeName>
    <alternativeName>
        <fullName evidence="1">Glutaminase PurQ</fullName>
        <ecNumber evidence="1">3.5.1.2</ecNumber>
    </alternativeName>
    <alternativeName>
        <fullName evidence="1">Phosphoribosylformylglycinamidine synthase subunit I</fullName>
    </alternativeName>
</protein>
<feature type="chain" id="PRO_0000100570" description="Phosphoribosylformylglycinamidine synthase subunit PurQ">
    <location>
        <begin position="1"/>
        <end position="224"/>
    </location>
</feature>
<feature type="domain" description="Glutamine amidotransferase type-1" evidence="1">
    <location>
        <begin position="4"/>
        <end position="224"/>
    </location>
</feature>
<feature type="active site" description="Nucleophile" evidence="1">
    <location>
        <position position="87"/>
    </location>
</feature>
<feature type="active site" evidence="1">
    <location>
        <position position="195"/>
    </location>
</feature>
<feature type="active site" evidence="1">
    <location>
        <position position="197"/>
    </location>
</feature>
<keyword id="KW-0067">ATP-binding</keyword>
<keyword id="KW-0963">Cytoplasm</keyword>
<keyword id="KW-0315">Glutamine amidotransferase</keyword>
<keyword id="KW-0378">Hydrolase</keyword>
<keyword id="KW-0436">Ligase</keyword>
<keyword id="KW-0547">Nucleotide-binding</keyword>
<keyword id="KW-0658">Purine biosynthesis</keyword>
<keyword id="KW-1185">Reference proteome</keyword>
<sequence length="224" mass="23818">MNARIGVITFPGTLDDVDAARAARHVGAEAVSLWHADADLKGVDAVVVPGGFSYGDYLRAGAIARLSPIMTEVVDAVQRGMPVLGICNGFQVLCEAGLLPGALIRNVGLHFICRDVWLRVISTSTAWTSRFEPETDLLVSLKSGEGRYVASENVLDELDGEGRVVFRYHDNINGSLRDIAGISSANGRVVGMMPHPEHAIEVLTGPSDDGLGLFYSALDSVLAS</sequence>
<comment type="function">
    <text evidence="1">Part of the phosphoribosylformylglycinamidine synthase complex involved in the purines biosynthetic pathway. Catalyzes the ATP-dependent conversion of formylglycinamide ribonucleotide (FGAR) and glutamine to yield formylglycinamidine ribonucleotide (FGAM) and glutamate. The FGAM synthase complex is composed of three subunits. PurQ produces an ammonia molecule by converting glutamine to glutamate. PurL transfers the ammonia molecule to FGAR to form FGAM in an ATP-dependent manner. PurS interacts with PurQ and PurL and is thought to assist in the transfer of the ammonia molecule from PurQ to PurL.</text>
</comment>
<comment type="catalytic activity">
    <reaction evidence="1">
        <text>N(2)-formyl-N(1)-(5-phospho-beta-D-ribosyl)glycinamide + L-glutamine + ATP + H2O = 2-formamido-N(1)-(5-O-phospho-beta-D-ribosyl)acetamidine + L-glutamate + ADP + phosphate + H(+)</text>
        <dbReference type="Rhea" id="RHEA:17129"/>
        <dbReference type="ChEBI" id="CHEBI:15377"/>
        <dbReference type="ChEBI" id="CHEBI:15378"/>
        <dbReference type="ChEBI" id="CHEBI:29985"/>
        <dbReference type="ChEBI" id="CHEBI:30616"/>
        <dbReference type="ChEBI" id="CHEBI:43474"/>
        <dbReference type="ChEBI" id="CHEBI:58359"/>
        <dbReference type="ChEBI" id="CHEBI:147286"/>
        <dbReference type="ChEBI" id="CHEBI:147287"/>
        <dbReference type="ChEBI" id="CHEBI:456216"/>
        <dbReference type="EC" id="6.3.5.3"/>
    </reaction>
</comment>
<comment type="catalytic activity">
    <reaction evidence="1">
        <text>L-glutamine + H2O = L-glutamate + NH4(+)</text>
        <dbReference type="Rhea" id="RHEA:15889"/>
        <dbReference type="ChEBI" id="CHEBI:15377"/>
        <dbReference type="ChEBI" id="CHEBI:28938"/>
        <dbReference type="ChEBI" id="CHEBI:29985"/>
        <dbReference type="ChEBI" id="CHEBI:58359"/>
        <dbReference type="EC" id="3.5.1.2"/>
    </reaction>
</comment>
<comment type="pathway">
    <text evidence="1">Purine metabolism; IMP biosynthesis via de novo pathway; 5-amino-1-(5-phospho-D-ribosyl)imidazole from N(2)-formyl-N(1)-(5-phospho-D-ribosyl)glycinamide: step 1/2.</text>
</comment>
<comment type="subunit">
    <text evidence="1">Part of the FGAM synthase complex composed of 1 PurL, 1 PurQ and 2 PurS subunits.</text>
</comment>
<comment type="subcellular location">
    <subcellularLocation>
        <location evidence="1">Cytoplasm</location>
    </subcellularLocation>
</comment>
<proteinExistence type="inferred from homology"/>
<organism>
    <name type="scientific">Mycobacterium leprae (strain TN)</name>
    <dbReference type="NCBI Taxonomy" id="272631"/>
    <lineage>
        <taxon>Bacteria</taxon>
        <taxon>Bacillati</taxon>
        <taxon>Actinomycetota</taxon>
        <taxon>Actinomycetes</taxon>
        <taxon>Mycobacteriales</taxon>
        <taxon>Mycobacteriaceae</taxon>
        <taxon>Mycobacterium</taxon>
    </lineage>
</organism>